<protein>
    <recommendedName>
        <fullName>Topoisomerase I damage affected protein 7</fullName>
    </recommendedName>
</protein>
<name>TDA7_YEAS8</name>
<proteinExistence type="inferred from homology"/>
<sequence>MNSNSTIGRTTLGESDTISLSFSEPSSSLNSRSTDVVFASTSTLVPQQGSLTSLPPVSSTATPTYYSTSLTYDETLHTSIDVSSTSTLVSSTDSSSSSEQDTYSSQYDPATSSYSIITPSMSIFSSTSPMSSSSSITSEWSSLTSTTPTLSSSATSLSSSWSSLSSPSSLLVSSSLSSSSYSDTKLFSFDSRSSIFSPSTPTVISPSYTYLSSISATSFQISTTSELSSSWFSTISPSTTSNKDTTFPSSSRNTSTSFYSSSLSSTNDFSTISKSSKLSPSASSSTVSISTISVPTSSSVSSSSSKVPSNRPSSSSSSDDTTSAYSSTYTFQSLQSTTSSSIPPTTQTPSTSTISTSPIPTSSQVFNTAAISSSEDSKTIYYFYTQTYDITDSSTTFVTGLPTTIAVAKSEVTSFSAPSSTITADMSFYQHWLDGSLDNNKNQGPSKTNTGTIVGSVVGSVGGILICVLVVWFMLVRKRKAKRHFKENDSFCHEIGRRTGFPTTAQAKEASLQAQDSGSQQRNTETASANNPFSNEFNFKARGNPPPVPPPRNVTATNGSFQNMRSNFMDQENRFSYGSSFTYSSLGSSTQGGFSTLSSNSIRLGRGLDNDISHDERNTVQNNSQGFLREII</sequence>
<feature type="chain" id="PRO_0000410750" description="Topoisomerase I damage affected protein 7">
    <location>
        <begin position="1"/>
        <end position="632"/>
    </location>
</feature>
<feature type="transmembrane region" description="Helical" evidence="3">
    <location>
        <begin position="453"/>
        <end position="473"/>
    </location>
</feature>
<feature type="region of interest" description="Disordered" evidence="4">
    <location>
        <begin position="1"/>
        <end position="33"/>
    </location>
</feature>
<feature type="region of interest" description="Disordered" evidence="4">
    <location>
        <begin position="87"/>
        <end position="109"/>
    </location>
</feature>
<feature type="region of interest" description="Disordered" evidence="4">
    <location>
        <begin position="236"/>
        <end position="267"/>
    </location>
</feature>
<feature type="region of interest" description="Disordered" evidence="4">
    <location>
        <begin position="295"/>
        <end position="322"/>
    </location>
</feature>
<feature type="region of interest" description="Disordered" evidence="4">
    <location>
        <begin position="335"/>
        <end position="359"/>
    </location>
</feature>
<feature type="region of interest" description="Disordered" evidence="4">
    <location>
        <begin position="506"/>
        <end position="551"/>
    </location>
</feature>
<feature type="compositionally biased region" description="Polar residues" evidence="4">
    <location>
        <begin position="1"/>
        <end position="18"/>
    </location>
</feature>
<feature type="compositionally biased region" description="Low complexity" evidence="4">
    <location>
        <begin position="19"/>
        <end position="33"/>
    </location>
</feature>
<feature type="compositionally biased region" description="Low complexity" evidence="4">
    <location>
        <begin position="87"/>
        <end position="108"/>
    </location>
</feature>
<feature type="compositionally biased region" description="Polar residues" evidence="4">
    <location>
        <begin position="506"/>
        <end position="537"/>
    </location>
</feature>
<feature type="modified residue" description="Phosphoserine" evidence="2">
    <location>
        <position position="624"/>
    </location>
</feature>
<feature type="glycosylation site" description="N-linked (GlcNAc...) asparagine" evidence="3">
    <location>
        <position position="4"/>
    </location>
</feature>
<feature type="glycosylation site" description="N-linked (GlcNAc...) asparagine" evidence="3">
    <location>
        <position position="253"/>
    </location>
</feature>
<feature type="glycosylation site" description="N-linked (GlcNAc...) asparagine" evidence="3">
    <location>
        <position position="488"/>
    </location>
</feature>
<feature type="glycosylation site" description="N-linked (GlcNAc...) asparagine" evidence="3">
    <location>
        <position position="553"/>
    </location>
</feature>
<feature type="glycosylation site" description="N-linked (GlcNAc...) asparagine" evidence="3">
    <location>
        <position position="558"/>
    </location>
</feature>
<feature type="glycosylation site" description="N-linked (GlcNAc...) asparagine" evidence="3">
    <location>
        <position position="622"/>
    </location>
</feature>
<feature type="cross-link" description="Glycyl lysine isopeptide (Lys-Gly) (interchain with G-Cter in ubiquitin)" evidence="2">
    <location>
        <position position="508"/>
    </location>
</feature>
<accession>C8ZG52</accession>
<gene>
    <name type="primary">TDA7</name>
    <name type="ORF">EC1118_1N9_1728g</name>
</gene>
<organism>
    <name type="scientific">Saccharomyces cerevisiae (strain Lalvin EC1118 / Prise de mousse)</name>
    <name type="common">Baker's yeast</name>
    <dbReference type="NCBI Taxonomy" id="643680"/>
    <lineage>
        <taxon>Eukaryota</taxon>
        <taxon>Fungi</taxon>
        <taxon>Dikarya</taxon>
        <taxon>Ascomycota</taxon>
        <taxon>Saccharomycotina</taxon>
        <taxon>Saccharomycetes</taxon>
        <taxon>Saccharomycetales</taxon>
        <taxon>Saccharomycetaceae</taxon>
        <taxon>Saccharomyces</taxon>
    </lineage>
</organism>
<reference key="1">
    <citation type="journal article" date="2009" name="Proc. Natl. Acad. Sci. U.S.A.">
        <title>Eukaryote-to-eukaryote gene transfer events revealed by the genome sequence of the wine yeast Saccharomyces cerevisiae EC1118.</title>
        <authorList>
            <person name="Novo M."/>
            <person name="Bigey F."/>
            <person name="Beyne E."/>
            <person name="Galeote V."/>
            <person name="Gavory F."/>
            <person name="Mallet S."/>
            <person name="Cambon B."/>
            <person name="Legras J.-L."/>
            <person name="Wincker P."/>
            <person name="Casaregola S."/>
            <person name="Dequin S."/>
        </authorList>
    </citation>
    <scope>NUCLEOTIDE SEQUENCE [LARGE SCALE GENOMIC DNA]</scope>
    <source>
        <strain>Lalvin EC1118 / Prise de mousse</strain>
    </source>
</reference>
<keyword id="KW-0325">Glycoprotein</keyword>
<keyword id="KW-1017">Isopeptide bond</keyword>
<keyword id="KW-0472">Membrane</keyword>
<keyword id="KW-0597">Phosphoprotein</keyword>
<keyword id="KW-0812">Transmembrane</keyword>
<keyword id="KW-1133">Transmembrane helix</keyword>
<keyword id="KW-0832">Ubl conjugation</keyword>
<keyword id="KW-0926">Vacuole</keyword>
<comment type="subcellular location">
    <subcellularLocation>
        <location evidence="1">Vacuole membrane</location>
        <topology evidence="1">Single-pass membrane protein</topology>
    </subcellularLocation>
</comment>
<comment type="similarity">
    <text evidence="5">Belongs to the TDA7 family.</text>
</comment>
<evidence type="ECO:0000250" key="1"/>
<evidence type="ECO:0000250" key="2">
    <source>
        <dbReference type="UniProtKB" id="P53882"/>
    </source>
</evidence>
<evidence type="ECO:0000255" key="3"/>
<evidence type="ECO:0000256" key="4">
    <source>
        <dbReference type="SAM" id="MobiDB-lite"/>
    </source>
</evidence>
<evidence type="ECO:0000305" key="5"/>
<dbReference type="EMBL" id="FN393086">
    <property type="protein sequence ID" value="CAY82425.1"/>
    <property type="molecule type" value="Genomic_DNA"/>
</dbReference>
<dbReference type="SMR" id="C8ZG52"/>
<dbReference type="GlyCosmos" id="C8ZG52">
    <property type="glycosylation" value="6 sites, No reported glycans"/>
</dbReference>
<dbReference type="HOGENOM" id="CLU_029057_0_0_1"/>
<dbReference type="OrthoDB" id="8235at4893"/>
<dbReference type="Proteomes" id="UP000000286">
    <property type="component" value="Chromosome XIV, Scaffold EC1118_1N9"/>
</dbReference>
<dbReference type="GO" id="GO:0005774">
    <property type="term" value="C:vacuolar membrane"/>
    <property type="evidence" value="ECO:0007669"/>
    <property type="project" value="UniProtKB-SubCell"/>
</dbReference>